<gene>
    <name type="primary">pduL</name>
    <name type="ordered locus">Lebu_0073</name>
</gene>
<feature type="chain" id="PRO_0000407710" description="Phosphate propanoyltransferase">
    <location>
        <begin position="1"/>
        <end position="211"/>
    </location>
</feature>
<feature type="binding site" evidence="1">
    <location>
        <begin position="30"/>
        <end position="32"/>
    </location>
    <ligand>
        <name>CoA</name>
        <dbReference type="ChEBI" id="CHEBI:57287"/>
    </ligand>
</feature>
<feature type="binding site" evidence="1">
    <location>
        <position position="34"/>
    </location>
    <ligand>
        <name>Zn(2+)</name>
        <dbReference type="ChEBI" id="CHEBI:29105"/>
        <label>1</label>
    </ligand>
</feature>
<feature type="binding site" evidence="1">
    <location>
        <position position="36"/>
    </location>
    <ligand>
        <name>Zn(2+)</name>
        <dbReference type="ChEBI" id="CHEBI:29105"/>
        <label>1</label>
    </ligand>
</feature>
<feature type="binding site" evidence="1">
    <location>
        <position position="76"/>
    </location>
    <ligand>
        <name>CoA</name>
        <dbReference type="ChEBI" id="CHEBI:57287"/>
    </ligand>
</feature>
<feature type="binding site" evidence="1">
    <location>
        <position position="89"/>
    </location>
    <ligand>
        <name>phosphate</name>
        <dbReference type="ChEBI" id="CHEBI:43474"/>
    </ligand>
</feature>
<feature type="binding site" evidence="1">
    <location>
        <position position="95"/>
    </location>
    <ligand>
        <name>Zn(2+)</name>
        <dbReference type="ChEBI" id="CHEBI:29105"/>
        <label>1</label>
    </ligand>
</feature>
<feature type="binding site" evidence="1">
    <location>
        <position position="143"/>
    </location>
    <ligand>
        <name>Zn(2+)</name>
        <dbReference type="ChEBI" id="CHEBI:29105"/>
        <label>2</label>
    </ligand>
</feature>
<feature type="binding site" evidence="1">
    <location>
        <position position="145"/>
    </location>
    <ligand>
        <name>Zn(2+)</name>
        <dbReference type="ChEBI" id="CHEBI:29105"/>
        <label>2</label>
    </ligand>
</feature>
<feature type="binding site" evidence="1">
    <location>
        <position position="190"/>
    </location>
    <ligand>
        <name>Zn(2+)</name>
        <dbReference type="ChEBI" id="CHEBI:29105"/>
        <label>2</label>
    </ligand>
</feature>
<feature type="binding site" evidence="1">
    <location>
        <position position="197"/>
    </location>
    <ligand>
        <name>CoA</name>
        <dbReference type="ChEBI" id="CHEBI:57287"/>
    </ligand>
</feature>
<accession>C7NCT6</accession>
<reference key="1">
    <citation type="journal article" date="2009" name="Stand. Genomic Sci.">
        <title>Complete genome sequence of Leptotrichia buccalis type strain (C-1013-b).</title>
        <authorList>
            <person name="Ivanova N."/>
            <person name="Gronow S."/>
            <person name="Lapidus A."/>
            <person name="Copeland A."/>
            <person name="Glavina Del Rio T."/>
            <person name="Nolan M."/>
            <person name="Lucas S."/>
            <person name="Chen F."/>
            <person name="Tice H."/>
            <person name="Cheng J.F."/>
            <person name="Saunders E."/>
            <person name="Bruce D."/>
            <person name="Goodwin L."/>
            <person name="Brettin T."/>
            <person name="Detter J.C."/>
            <person name="Han C."/>
            <person name="Pitluck S."/>
            <person name="Mikhailova N."/>
            <person name="Pati A."/>
            <person name="Mavrommatis K."/>
            <person name="Chen A."/>
            <person name="Palaniappan K."/>
            <person name="Land M."/>
            <person name="Hauser L."/>
            <person name="Chang Y.J."/>
            <person name="Jeffries C.D."/>
            <person name="Chain P."/>
            <person name="Rohde C."/>
            <person name="Goker M."/>
            <person name="Bristow J."/>
            <person name="Eisen J.A."/>
            <person name="Markowitz V."/>
            <person name="Hugenholtz P."/>
            <person name="Kyrpides N.C."/>
            <person name="Klenk H.P."/>
        </authorList>
    </citation>
    <scope>NUCLEOTIDE SEQUENCE [LARGE SCALE GENOMIC DNA]</scope>
    <source>
        <strain>ATCC 14201 / DSM 1135 / JCM 12969 / NCTC 10249 / C-1013-b</strain>
    </source>
</reference>
<sequence length="211" mass="23504">MDRNELERIIREKLQEILGAEKDDTFMVEASGRHVHLTKEHVEALFGKGYELTPAKDLSQPGQFAAKERVRVIGPKGEFSNVVVLGPCRSFSQVELSLTDCRQIGVKGVIRESGKIEGTPGILLGVGDKYVQLDKGVIVAKRHIHMTNEDAKRLSVKDGETVKVKIHSDRPLIFDDVLIRVRDSFRLSMHIDFDEANSCGYTSGMTGSIEK</sequence>
<name>PDUL_LEPBD</name>
<proteinExistence type="inferred from homology"/>
<dbReference type="EC" id="2.3.1.222"/>
<dbReference type="EMBL" id="CP001685">
    <property type="protein sequence ID" value="ACV38006.1"/>
    <property type="molecule type" value="Genomic_DNA"/>
</dbReference>
<dbReference type="RefSeq" id="WP_012806200.1">
    <property type="nucleotide sequence ID" value="NC_013192.1"/>
</dbReference>
<dbReference type="SMR" id="C7NCT6"/>
<dbReference type="STRING" id="523794.Lebu_0073"/>
<dbReference type="KEGG" id="lba:Lebu_0073"/>
<dbReference type="eggNOG" id="COG4869">
    <property type="taxonomic scope" value="Bacteria"/>
</dbReference>
<dbReference type="HOGENOM" id="CLU_080676_1_0_0"/>
<dbReference type="OrthoDB" id="9784365at2"/>
<dbReference type="UniPathway" id="UPA00621"/>
<dbReference type="Proteomes" id="UP000001910">
    <property type="component" value="Chromosome"/>
</dbReference>
<dbReference type="GO" id="GO:0031469">
    <property type="term" value="C:bacterial microcompartment"/>
    <property type="evidence" value="ECO:0007669"/>
    <property type="project" value="UniProtKB-SubCell"/>
</dbReference>
<dbReference type="GO" id="GO:0016747">
    <property type="term" value="F:acyltransferase activity, transferring groups other than amino-acyl groups"/>
    <property type="evidence" value="ECO:0007669"/>
    <property type="project" value="InterPro"/>
</dbReference>
<dbReference type="GO" id="GO:0046872">
    <property type="term" value="F:metal ion binding"/>
    <property type="evidence" value="ECO:0007669"/>
    <property type="project" value="UniProtKB-KW"/>
</dbReference>
<dbReference type="GO" id="GO:0051144">
    <property type="term" value="P:propanediol catabolic process"/>
    <property type="evidence" value="ECO:0007669"/>
    <property type="project" value="UniProtKB-UniPathway"/>
</dbReference>
<dbReference type="InterPro" id="IPR008300">
    <property type="entry name" value="PTAC"/>
</dbReference>
<dbReference type="NCBIfam" id="NF040837">
    <property type="entry name" value="BMC_EutD_Gpos"/>
    <property type="match status" value="1"/>
</dbReference>
<dbReference type="NCBIfam" id="NF011652">
    <property type="entry name" value="PRK15070.1"/>
    <property type="match status" value="1"/>
</dbReference>
<dbReference type="PANTHER" id="PTHR39453">
    <property type="entry name" value="PHOSPHATE PROPANOYLTRANSFERASE"/>
    <property type="match status" value="1"/>
</dbReference>
<dbReference type="PANTHER" id="PTHR39453:SF1">
    <property type="entry name" value="PHOSPHATE PROPANOYLTRANSFERASE"/>
    <property type="match status" value="1"/>
</dbReference>
<dbReference type="Pfam" id="PF06130">
    <property type="entry name" value="PTAC"/>
    <property type="match status" value="1"/>
</dbReference>
<dbReference type="PIRSF" id="PIRSF010130">
    <property type="entry name" value="PduL"/>
    <property type="match status" value="1"/>
</dbReference>
<evidence type="ECO:0000250" key="1">
    <source>
        <dbReference type="UniProtKB" id="Q21A54"/>
    </source>
</evidence>
<evidence type="ECO:0000250" key="2">
    <source>
        <dbReference type="UniProtKB" id="Q9XDN5"/>
    </source>
</evidence>
<evidence type="ECO:0000305" key="3"/>
<comment type="function">
    <text evidence="2">Involved in 1,2-propanediol (1,2-PD) utilization within the bacterial microcompartment (BMC) dedicated to 1,2-PD degradation by catalyzing the conversion of propanoyl-CoA to propanoyl-phosphate.</text>
</comment>
<comment type="catalytic activity">
    <reaction evidence="2">
        <text>propanoyl-CoA + phosphate = propanoyl phosphate + CoA</text>
        <dbReference type="Rhea" id="RHEA:28046"/>
        <dbReference type="ChEBI" id="CHEBI:43474"/>
        <dbReference type="ChEBI" id="CHEBI:57287"/>
        <dbReference type="ChEBI" id="CHEBI:57392"/>
        <dbReference type="ChEBI" id="CHEBI:58933"/>
        <dbReference type="EC" id="2.3.1.222"/>
    </reaction>
</comment>
<comment type="cofactor">
    <cofactor evidence="1">
        <name>Zn(2+)</name>
        <dbReference type="ChEBI" id="CHEBI:29105"/>
    </cofactor>
    <text evidence="1">There are 2 Zn(2+) ions per monomer; Zn(2+) and CoA bind inbetween the 2 domains in each monomer.</text>
</comment>
<comment type="pathway">
    <text>Polyol metabolism; 1,2-propanediol degradation.</text>
</comment>
<comment type="subcellular location">
    <subcellularLocation>
        <location evidence="2">Bacterial microcompartment</location>
    </subcellularLocation>
</comment>
<comment type="domain">
    <text evidence="1">Formed by 2 beta-barrels, each is capped on both ends by short alpha-helices.</text>
</comment>
<comment type="similarity">
    <text evidence="3">Belongs to the PduL family.</text>
</comment>
<keyword id="KW-0012">Acyltransferase</keyword>
<keyword id="KW-1283">Bacterial microcompartment</keyword>
<keyword id="KW-0479">Metal-binding</keyword>
<keyword id="KW-0808">Transferase</keyword>
<keyword id="KW-0862">Zinc</keyword>
<organism>
    <name type="scientific">Leptotrichia buccalis (strain ATCC 14201 / DSM 1135 / JCM 12969 / NCTC 10249 / C-1013-b)</name>
    <dbReference type="NCBI Taxonomy" id="523794"/>
    <lineage>
        <taxon>Bacteria</taxon>
        <taxon>Fusobacteriati</taxon>
        <taxon>Fusobacteriota</taxon>
        <taxon>Fusobacteriia</taxon>
        <taxon>Fusobacteriales</taxon>
        <taxon>Leptotrichiaceae</taxon>
        <taxon>Leptotrichia</taxon>
    </lineage>
</organism>
<protein>
    <recommendedName>
        <fullName>Phosphate propanoyltransferase</fullName>
        <ecNumber>2.3.1.222</ecNumber>
    </recommendedName>
    <alternativeName>
        <fullName>Phosphate acyltransferase PduL</fullName>
    </alternativeName>
    <alternativeName>
        <fullName>Phosphotransacylase PduL</fullName>
        <shortName>PTAC</shortName>
    </alternativeName>
    <alternativeName>
        <fullName>Propanediol utilization protein PduL</fullName>
    </alternativeName>
</protein>